<gene>
    <name evidence="1" type="primary">fabZ</name>
</gene>
<accession>P32204</accession>
<sequence>MIIDITEIMDWIPHRYPFLLVDRVLKIDPNKSITGIKNVTVNEPQFTGHFPARPVMPGVLMVEAMAQLAAILVAKSLGSTKNKEVFLMTIENAKFRRIVQPGDTMHIHAVIDQQRANVWKFSSTVTVEGEIAAESKFTAMIKDKT</sequence>
<feature type="chain" id="PRO_0000091722" description="3-hydroxyacyl-[acyl-carrier-protein] dehydratase FabZ">
    <location>
        <begin position="1"/>
        <end position="145"/>
    </location>
</feature>
<feature type="active site" evidence="1">
    <location>
        <position position="49"/>
    </location>
</feature>
<evidence type="ECO:0000255" key="1">
    <source>
        <dbReference type="HAMAP-Rule" id="MF_00406"/>
    </source>
</evidence>
<keyword id="KW-0963">Cytoplasm</keyword>
<keyword id="KW-0441">Lipid A biosynthesis</keyword>
<keyword id="KW-0444">Lipid biosynthesis</keyword>
<keyword id="KW-0443">Lipid metabolism</keyword>
<keyword id="KW-0456">Lyase</keyword>
<name>FABZ_RICRI</name>
<organism>
    <name type="scientific">Rickettsia rickettsii</name>
    <dbReference type="NCBI Taxonomy" id="783"/>
    <lineage>
        <taxon>Bacteria</taxon>
        <taxon>Pseudomonadati</taxon>
        <taxon>Pseudomonadota</taxon>
        <taxon>Alphaproteobacteria</taxon>
        <taxon>Rickettsiales</taxon>
        <taxon>Rickettsiaceae</taxon>
        <taxon>Rickettsieae</taxon>
        <taxon>Rickettsia</taxon>
        <taxon>spotted fever group</taxon>
    </lineage>
</organism>
<protein>
    <recommendedName>
        <fullName evidence="1">3-hydroxyacyl-[acyl-carrier-protein] dehydratase FabZ</fullName>
        <ecNumber evidence="1">4.2.1.59</ecNumber>
    </recommendedName>
    <alternativeName>
        <fullName evidence="1">(3R)-hydroxymyristoyl-[acyl-carrier-protein] dehydratase</fullName>
        <shortName evidence="1">(3R)-hydroxymyristoyl-ACP dehydrase</shortName>
    </alternativeName>
    <alternativeName>
        <fullName evidence="1">Beta-hydroxyacyl-ACP dehydratase</fullName>
    </alternativeName>
</protein>
<reference key="1">
    <citation type="journal article" date="1994" name="Gene">
        <title>Characterization of a Rickettsia rickettsii DNA fragment analogous to the fir A-ORF17-lpxA region of Escherichia coli.</title>
        <authorList>
            <person name="Shaw E.I."/>
            <person name="Wood D.O."/>
        </authorList>
    </citation>
    <scope>NUCLEOTIDE SEQUENCE [GENOMIC DNA]</scope>
</reference>
<proteinExistence type="inferred from homology"/>
<comment type="function">
    <text evidence="1">Involved in unsaturated fatty acids biosynthesis. Catalyzes the dehydration of short chain beta-hydroxyacyl-ACPs and long chain saturated and unsaturated beta-hydroxyacyl-ACPs.</text>
</comment>
<comment type="catalytic activity">
    <reaction evidence="1">
        <text>a (3R)-hydroxyacyl-[ACP] = a (2E)-enoyl-[ACP] + H2O</text>
        <dbReference type="Rhea" id="RHEA:13097"/>
        <dbReference type="Rhea" id="RHEA-COMP:9925"/>
        <dbReference type="Rhea" id="RHEA-COMP:9945"/>
        <dbReference type="ChEBI" id="CHEBI:15377"/>
        <dbReference type="ChEBI" id="CHEBI:78784"/>
        <dbReference type="ChEBI" id="CHEBI:78827"/>
        <dbReference type="EC" id="4.2.1.59"/>
    </reaction>
</comment>
<comment type="subcellular location">
    <subcellularLocation>
        <location evidence="1">Cytoplasm</location>
    </subcellularLocation>
</comment>
<comment type="similarity">
    <text evidence="1">Belongs to the thioester dehydratase family. FabZ subfamily.</text>
</comment>
<dbReference type="EC" id="4.2.1.59" evidence="1"/>
<dbReference type="EMBL" id="L22690">
    <property type="protein sequence ID" value="AAA26385.1"/>
    <property type="molecule type" value="Genomic_DNA"/>
</dbReference>
<dbReference type="RefSeq" id="WP_004997000.1">
    <property type="nucleotide sequence ID" value="NZ_CP151153.1"/>
</dbReference>
<dbReference type="SMR" id="P32204"/>
<dbReference type="GeneID" id="95361756"/>
<dbReference type="OMA" id="FPGRPLM"/>
<dbReference type="GO" id="GO:0005737">
    <property type="term" value="C:cytoplasm"/>
    <property type="evidence" value="ECO:0007669"/>
    <property type="project" value="UniProtKB-SubCell"/>
</dbReference>
<dbReference type="GO" id="GO:0016020">
    <property type="term" value="C:membrane"/>
    <property type="evidence" value="ECO:0007669"/>
    <property type="project" value="GOC"/>
</dbReference>
<dbReference type="GO" id="GO:0019171">
    <property type="term" value="F:(3R)-hydroxyacyl-[acyl-carrier-protein] dehydratase activity"/>
    <property type="evidence" value="ECO:0007669"/>
    <property type="project" value="UniProtKB-EC"/>
</dbReference>
<dbReference type="GO" id="GO:0006633">
    <property type="term" value="P:fatty acid biosynthetic process"/>
    <property type="evidence" value="ECO:0007669"/>
    <property type="project" value="UniProtKB-UniRule"/>
</dbReference>
<dbReference type="GO" id="GO:0009245">
    <property type="term" value="P:lipid A biosynthetic process"/>
    <property type="evidence" value="ECO:0007669"/>
    <property type="project" value="UniProtKB-UniRule"/>
</dbReference>
<dbReference type="CDD" id="cd01288">
    <property type="entry name" value="FabZ"/>
    <property type="match status" value="1"/>
</dbReference>
<dbReference type="FunFam" id="3.10.129.10:FF:000001">
    <property type="entry name" value="3-hydroxyacyl-[acyl-carrier-protein] dehydratase FabZ"/>
    <property type="match status" value="1"/>
</dbReference>
<dbReference type="Gene3D" id="3.10.129.10">
    <property type="entry name" value="Hotdog Thioesterase"/>
    <property type="match status" value="1"/>
</dbReference>
<dbReference type="HAMAP" id="MF_00406">
    <property type="entry name" value="FabZ"/>
    <property type="match status" value="1"/>
</dbReference>
<dbReference type="InterPro" id="IPR013114">
    <property type="entry name" value="FabA_FabZ"/>
</dbReference>
<dbReference type="InterPro" id="IPR010084">
    <property type="entry name" value="FabZ"/>
</dbReference>
<dbReference type="InterPro" id="IPR029069">
    <property type="entry name" value="HotDog_dom_sf"/>
</dbReference>
<dbReference type="NCBIfam" id="TIGR01750">
    <property type="entry name" value="fabZ"/>
    <property type="match status" value="1"/>
</dbReference>
<dbReference type="NCBIfam" id="NF000582">
    <property type="entry name" value="PRK00006.1"/>
    <property type="match status" value="1"/>
</dbReference>
<dbReference type="PANTHER" id="PTHR30272">
    <property type="entry name" value="3-HYDROXYACYL-[ACYL-CARRIER-PROTEIN] DEHYDRATASE"/>
    <property type="match status" value="1"/>
</dbReference>
<dbReference type="PANTHER" id="PTHR30272:SF1">
    <property type="entry name" value="3-HYDROXYACYL-[ACYL-CARRIER-PROTEIN] DEHYDRATASE"/>
    <property type="match status" value="1"/>
</dbReference>
<dbReference type="Pfam" id="PF07977">
    <property type="entry name" value="FabA"/>
    <property type="match status" value="1"/>
</dbReference>
<dbReference type="SUPFAM" id="SSF54637">
    <property type="entry name" value="Thioesterase/thiol ester dehydrase-isomerase"/>
    <property type="match status" value="1"/>
</dbReference>